<keyword id="KW-0028">Amino-acid biosynthesis</keyword>
<keyword id="KW-0057">Aromatic amino acid biosynthesis</keyword>
<keyword id="KW-0274">FAD</keyword>
<keyword id="KW-0285">Flavoprotein</keyword>
<keyword id="KW-0288">FMN</keyword>
<keyword id="KW-0456">Lyase</keyword>
<keyword id="KW-0521">NADP</keyword>
<dbReference type="EC" id="4.2.3.5" evidence="1"/>
<dbReference type="EMBL" id="CP000511">
    <property type="protein sequence ID" value="ABM13453.1"/>
    <property type="status" value="ALT_INIT"/>
    <property type="molecule type" value="Genomic_DNA"/>
</dbReference>
<dbReference type="RefSeq" id="WP_036376286.1">
    <property type="nucleotide sequence ID" value="NZ_JACKSD010000055.1"/>
</dbReference>
<dbReference type="SMR" id="A1T8F3"/>
<dbReference type="STRING" id="350058.Mvan_2645"/>
<dbReference type="KEGG" id="mva:Mvan_2645"/>
<dbReference type="eggNOG" id="COG0082">
    <property type="taxonomic scope" value="Bacteria"/>
</dbReference>
<dbReference type="HOGENOM" id="CLU_034547_2_0_11"/>
<dbReference type="UniPathway" id="UPA00053">
    <property type="reaction ID" value="UER00090"/>
</dbReference>
<dbReference type="Proteomes" id="UP000009159">
    <property type="component" value="Chromosome"/>
</dbReference>
<dbReference type="GO" id="GO:0005829">
    <property type="term" value="C:cytosol"/>
    <property type="evidence" value="ECO:0007669"/>
    <property type="project" value="TreeGrafter"/>
</dbReference>
<dbReference type="GO" id="GO:0004107">
    <property type="term" value="F:chorismate synthase activity"/>
    <property type="evidence" value="ECO:0007669"/>
    <property type="project" value="UniProtKB-UniRule"/>
</dbReference>
<dbReference type="GO" id="GO:0010181">
    <property type="term" value="F:FMN binding"/>
    <property type="evidence" value="ECO:0007669"/>
    <property type="project" value="TreeGrafter"/>
</dbReference>
<dbReference type="GO" id="GO:0008652">
    <property type="term" value="P:amino acid biosynthetic process"/>
    <property type="evidence" value="ECO:0007669"/>
    <property type="project" value="UniProtKB-KW"/>
</dbReference>
<dbReference type="GO" id="GO:0009073">
    <property type="term" value="P:aromatic amino acid family biosynthetic process"/>
    <property type="evidence" value="ECO:0007669"/>
    <property type="project" value="UniProtKB-KW"/>
</dbReference>
<dbReference type="GO" id="GO:0009423">
    <property type="term" value="P:chorismate biosynthetic process"/>
    <property type="evidence" value="ECO:0007669"/>
    <property type="project" value="UniProtKB-UniRule"/>
</dbReference>
<dbReference type="CDD" id="cd07304">
    <property type="entry name" value="Chorismate_synthase"/>
    <property type="match status" value="1"/>
</dbReference>
<dbReference type="FunFam" id="3.60.150.10:FF:000002">
    <property type="entry name" value="Chorismate synthase"/>
    <property type="match status" value="1"/>
</dbReference>
<dbReference type="Gene3D" id="3.60.150.10">
    <property type="entry name" value="Chorismate synthase AroC"/>
    <property type="match status" value="1"/>
</dbReference>
<dbReference type="HAMAP" id="MF_00300">
    <property type="entry name" value="Chorismate_synth"/>
    <property type="match status" value="1"/>
</dbReference>
<dbReference type="InterPro" id="IPR000453">
    <property type="entry name" value="Chorismate_synth"/>
</dbReference>
<dbReference type="InterPro" id="IPR035904">
    <property type="entry name" value="Chorismate_synth_AroC_sf"/>
</dbReference>
<dbReference type="InterPro" id="IPR020541">
    <property type="entry name" value="Chorismate_synthase_CS"/>
</dbReference>
<dbReference type="NCBIfam" id="TIGR00033">
    <property type="entry name" value="aroC"/>
    <property type="match status" value="1"/>
</dbReference>
<dbReference type="NCBIfam" id="NF003793">
    <property type="entry name" value="PRK05382.1"/>
    <property type="match status" value="1"/>
</dbReference>
<dbReference type="PANTHER" id="PTHR21085">
    <property type="entry name" value="CHORISMATE SYNTHASE"/>
    <property type="match status" value="1"/>
</dbReference>
<dbReference type="PANTHER" id="PTHR21085:SF0">
    <property type="entry name" value="CHORISMATE SYNTHASE"/>
    <property type="match status" value="1"/>
</dbReference>
<dbReference type="Pfam" id="PF01264">
    <property type="entry name" value="Chorismate_synt"/>
    <property type="match status" value="1"/>
</dbReference>
<dbReference type="PIRSF" id="PIRSF001456">
    <property type="entry name" value="Chorismate_synth"/>
    <property type="match status" value="1"/>
</dbReference>
<dbReference type="SUPFAM" id="SSF103263">
    <property type="entry name" value="Chorismate synthase, AroC"/>
    <property type="match status" value="1"/>
</dbReference>
<dbReference type="PROSITE" id="PS00787">
    <property type="entry name" value="CHORISMATE_SYNTHASE_1"/>
    <property type="match status" value="1"/>
</dbReference>
<dbReference type="PROSITE" id="PS00788">
    <property type="entry name" value="CHORISMATE_SYNTHASE_2"/>
    <property type="match status" value="1"/>
</dbReference>
<dbReference type="PROSITE" id="PS00789">
    <property type="entry name" value="CHORISMATE_SYNTHASE_3"/>
    <property type="match status" value="1"/>
</dbReference>
<feature type="chain" id="PRO_0000322416" description="Chorismate synthase">
    <location>
        <begin position="1"/>
        <end position="404"/>
    </location>
</feature>
<feature type="binding site" evidence="1">
    <location>
        <position position="40"/>
    </location>
    <ligand>
        <name>NADP(+)</name>
        <dbReference type="ChEBI" id="CHEBI:58349"/>
    </ligand>
</feature>
<feature type="binding site" evidence="1">
    <location>
        <position position="46"/>
    </location>
    <ligand>
        <name>NADP(+)</name>
        <dbReference type="ChEBI" id="CHEBI:58349"/>
    </ligand>
</feature>
<feature type="binding site" evidence="1">
    <location>
        <begin position="136"/>
        <end position="138"/>
    </location>
    <ligand>
        <name>FMN</name>
        <dbReference type="ChEBI" id="CHEBI:58210"/>
    </ligand>
</feature>
<feature type="binding site" evidence="1">
    <location>
        <begin position="257"/>
        <end position="258"/>
    </location>
    <ligand>
        <name>FMN</name>
        <dbReference type="ChEBI" id="CHEBI:58210"/>
    </ligand>
</feature>
<feature type="binding site" evidence="1">
    <location>
        <position position="301"/>
    </location>
    <ligand>
        <name>FMN</name>
        <dbReference type="ChEBI" id="CHEBI:58210"/>
    </ligand>
</feature>
<feature type="binding site" evidence="1">
    <location>
        <begin position="316"/>
        <end position="320"/>
    </location>
    <ligand>
        <name>FMN</name>
        <dbReference type="ChEBI" id="CHEBI:58210"/>
    </ligand>
</feature>
<feature type="binding site" evidence="1">
    <location>
        <position position="342"/>
    </location>
    <ligand>
        <name>FMN</name>
        <dbReference type="ChEBI" id="CHEBI:58210"/>
    </ligand>
</feature>
<comment type="function">
    <text evidence="1">Catalyzes the anti-1,4-elimination of the C-3 phosphate and the C-6 proR hydrogen from 5-enolpyruvylshikimate-3-phosphate (EPSP) to yield chorismate, which is the branch point compound that serves as the starting substrate for the three terminal pathways of aromatic amino acid biosynthesis. This reaction introduces a second double bond into the aromatic ring system.</text>
</comment>
<comment type="catalytic activity">
    <reaction evidence="1">
        <text>5-O-(1-carboxyvinyl)-3-phosphoshikimate = chorismate + phosphate</text>
        <dbReference type="Rhea" id="RHEA:21020"/>
        <dbReference type="ChEBI" id="CHEBI:29748"/>
        <dbReference type="ChEBI" id="CHEBI:43474"/>
        <dbReference type="ChEBI" id="CHEBI:57701"/>
        <dbReference type="EC" id="4.2.3.5"/>
    </reaction>
</comment>
<comment type="cofactor">
    <cofactor evidence="1">
        <name>FMNH2</name>
        <dbReference type="ChEBI" id="CHEBI:57618"/>
    </cofactor>
    <text evidence="1">Reduced FMN (FMNH(2)).</text>
</comment>
<comment type="pathway">
    <text evidence="1">Metabolic intermediate biosynthesis; chorismate biosynthesis; chorismate from D-erythrose 4-phosphate and phosphoenolpyruvate: step 7/7.</text>
</comment>
<comment type="subunit">
    <text evidence="1">Homotetramer.</text>
</comment>
<comment type="similarity">
    <text evidence="1">Belongs to the chorismate synthase family.</text>
</comment>
<comment type="sequence caution" evidence="2">
    <conflict type="erroneous initiation">
        <sequence resource="EMBL-CDS" id="ABM13453"/>
    </conflict>
    <text>Extended N-terminus.</text>
</comment>
<name>AROC_MYCVP</name>
<evidence type="ECO:0000255" key="1">
    <source>
        <dbReference type="HAMAP-Rule" id="MF_00300"/>
    </source>
</evidence>
<evidence type="ECO:0000305" key="2"/>
<reference key="1">
    <citation type="submission" date="2006-12" db="EMBL/GenBank/DDBJ databases">
        <title>Complete sequence of Mycobacterium vanbaalenii PYR-1.</title>
        <authorList>
            <consortium name="US DOE Joint Genome Institute"/>
            <person name="Copeland A."/>
            <person name="Lucas S."/>
            <person name="Lapidus A."/>
            <person name="Barry K."/>
            <person name="Detter J.C."/>
            <person name="Glavina del Rio T."/>
            <person name="Hammon N."/>
            <person name="Israni S."/>
            <person name="Dalin E."/>
            <person name="Tice H."/>
            <person name="Pitluck S."/>
            <person name="Singan V."/>
            <person name="Schmutz J."/>
            <person name="Larimer F."/>
            <person name="Land M."/>
            <person name="Hauser L."/>
            <person name="Kyrpides N."/>
            <person name="Anderson I.J."/>
            <person name="Miller C."/>
            <person name="Richardson P."/>
        </authorList>
    </citation>
    <scope>NUCLEOTIDE SEQUENCE [LARGE SCALE GENOMIC DNA]</scope>
    <source>
        <strain>DSM 7251 / JCM 13017 / BCRC 16820 / KCTC 9966 / NRRL B-24157 / PYR-1</strain>
    </source>
</reference>
<proteinExistence type="inferred from homology"/>
<gene>
    <name evidence="1" type="primary">aroC</name>
    <name type="ordered locus">Mvan_2645</name>
</gene>
<accession>A1T8F3</accession>
<sequence length="404" mass="42112">MLRWTTAGESHGRALVAMVEGMVAGVHVTTQDISAQLARRRLGYGRGARMKFEQDQVTMLTGLRHGVTLGGPIAIEIGNTEWPKWETVMAPDPVDPAVLADSAARNAPLTRPRPGHADYAGMLKYGFDDARPVLERASARETAARVAAGTVARAFLQQALGVEIVSHVISIGASKPYDGPPPQAADLTAIDASPVRAFDAASEALMIDEIEAAKRDGDTLGGVVEVVAHGLPVGLGSFTSGDNRLDSQLAGAVMGIQAIKGVEIGDGFETARRRGSVAHDEIYPGADGVMRSTNRAGGLEGGMTNGLPVRVRAAMKPISTVPRALATVDMATGEEAVAIHQRSDVCAVPAAAVVVETMVALVLARAVLEKFGGDSLAETRANIDSYLRAVATREPSTDGARASG</sequence>
<protein>
    <recommendedName>
        <fullName evidence="1">Chorismate synthase</fullName>
        <shortName evidence="1">CS</shortName>
        <ecNumber evidence="1">4.2.3.5</ecNumber>
    </recommendedName>
    <alternativeName>
        <fullName evidence="1">5-enolpyruvylshikimate-3-phosphate phospholyase</fullName>
    </alternativeName>
</protein>
<organism>
    <name type="scientific">Mycolicibacterium vanbaalenii (strain DSM 7251 / JCM 13017 / BCRC 16820 / KCTC 9966 / NRRL B-24157 / PYR-1)</name>
    <name type="common">Mycobacterium vanbaalenii</name>
    <dbReference type="NCBI Taxonomy" id="350058"/>
    <lineage>
        <taxon>Bacteria</taxon>
        <taxon>Bacillati</taxon>
        <taxon>Actinomycetota</taxon>
        <taxon>Actinomycetes</taxon>
        <taxon>Mycobacteriales</taxon>
        <taxon>Mycobacteriaceae</taxon>
        <taxon>Mycolicibacterium</taxon>
    </lineage>
</organism>